<protein>
    <recommendedName>
        <fullName evidence="1">Large ribosomal subunit protein uL13</fullName>
    </recommendedName>
    <alternativeName>
        <fullName evidence="2">50S ribosomal protein L13</fullName>
    </alternativeName>
</protein>
<sequence>MKTFSAKPAEVTKKWVLIDAKGLVVGRLATIVAMRLRGKHLPTYTPHVDCGDNVIIINAQHAVLTGRKREQKTYYKHTGYVGHVKERTARQILEGKHPERVLEKAVERMIPRGPLGRVQMGNLRVYGGADHPHEAQQPEKIDIAKLNRKNTRAA</sequence>
<gene>
    <name evidence="1" type="primary">rplM</name>
    <name type="ordered locus">bll4963</name>
</gene>
<comment type="function">
    <text evidence="1">This protein is one of the early assembly proteins of the 50S ribosomal subunit, although it is not seen to bind rRNA by itself. It is important during the early stages of 50S assembly.</text>
</comment>
<comment type="subunit">
    <text evidence="1">Part of the 50S ribosomal subunit.</text>
</comment>
<comment type="similarity">
    <text evidence="1">Belongs to the universal ribosomal protein uL13 family.</text>
</comment>
<accession>Q89KE4</accession>
<reference key="1">
    <citation type="journal article" date="2002" name="DNA Res.">
        <title>Complete genomic sequence of nitrogen-fixing symbiotic bacterium Bradyrhizobium japonicum USDA110.</title>
        <authorList>
            <person name="Kaneko T."/>
            <person name="Nakamura Y."/>
            <person name="Sato S."/>
            <person name="Minamisawa K."/>
            <person name="Uchiumi T."/>
            <person name="Sasamoto S."/>
            <person name="Watanabe A."/>
            <person name="Idesawa K."/>
            <person name="Iriguchi M."/>
            <person name="Kawashima K."/>
            <person name="Kohara M."/>
            <person name="Matsumoto M."/>
            <person name="Shimpo S."/>
            <person name="Tsuruoka H."/>
            <person name="Wada T."/>
            <person name="Yamada M."/>
            <person name="Tabata S."/>
        </authorList>
    </citation>
    <scope>NUCLEOTIDE SEQUENCE [LARGE SCALE GENOMIC DNA]</scope>
    <source>
        <strain>JCM 10833 / BCRC 13528 / IAM 13628 / NBRC 14792 / USDA 110</strain>
    </source>
</reference>
<organism>
    <name type="scientific">Bradyrhizobium diazoefficiens (strain JCM 10833 / BCRC 13528 / IAM 13628 / NBRC 14792 / USDA 110)</name>
    <dbReference type="NCBI Taxonomy" id="224911"/>
    <lineage>
        <taxon>Bacteria</taxon>
        <taxon>Pseudomonadati</taxon>
        <taxon>Pseudomonadota</taxon>
        <taxon>Alphaproteobacteria</taxon>
        <taxon>Hyphomicrobiales</taxon>
        <taxon>Nitrobacteraceae</taxon>
        <taxon>Bradyrhizobium</taxon>
    </lineage>
</organism>
<proteinExistence type="inferred from homology"/>
<name>RL13_BRADU</name>
<keyword id="KW-1185">Reference proteome</keyword>
<keyword id="KW-0687">Ribonucleoprotein</keyword>
<keyword id="KW-0689">Ribosomal protein</keyword>
<dbReference type="EMBL" id="BA000040">
    <property type="protein sequence ID" value="BAC50228.1"/>
    <property type="molecule type" value="Genomic_DNA"/>
</dbReference>
<dbReference type="RefSeq" id="NP_771603.1">
    <property type="nucleotide sequence ID" value="NC_004463.1"/>
</dbReference>
<dbReference type="RefSeq" id="WP_011087726.1">
    <property type="nucleotide sequence ID" value="NZ_CP011360.1"/>
</dbReference>
<dbReference type="SMR" id="Q89KE4"/>
<dbReference type="FunCoup" id="Q89KE4">
    <property type="interactions" value="884"/>
</dbReference>
<dbReference type="STRING" id="224911.AAV28_22170"/>
<dbReference type="EnsemblBacteria" id="BAC50228">
    <property type="protein sequence ID" value="BAC50228"/>
    <property type="gene ID" value="BAC50228"/>
</dbReference>
<dbReference type="GeneID" id="46491971"/>
<dbReference type="KEGG" id="bja:bll4963"/>
<dbReference type="PATRIC" id="fig|224911.44.peg.4817"/>
<dbReference type="eggNOG" id="COG0102">
    <property type="taxonomic scope" value="Bacteria"/>
</dbReference>
<dbReference type="HOGENOM" id="CLU_082184_2_0_5"/>
<dbReference type="InParanoid" id="Q89KE4"/>
<dbReference type="OrthoDB" id="9801330at2"/>
<dbReference type="PhylomeDB" id="Q89KE4"/>
<dbReference type="PRO" id="PR:Q89KE4"/>
<dbReference type="Proteomes" id="UP000002526">
    <property type="component" value="Chromosome"/>
</dbReference>
<dbReference type="GO" id="GO:0022625">
    <property type="term" value="C:cytosolic large ribosomal subunit"/>
    <property type="evidence" value="ECO:0000318"/>
    <property type="project" value="GO_Central"/>
</dbReference>
<dbReference type="GO" id="GO:0005840">
    <property type="term" value="C:ribosome"/>
    <property type="evidence" value="ECO:0000318"/>
    <property type="project" value="GO_Central"/>
</dbReference>
<dbReference type="GO" id="GO:0003729">
    <property type="term" value="F:mRNA binding"/>
    <property type="evidence" value="ECO:0000318"/>
    <property type="project" value="GO_Central"/>
</dbReference>
<dbReference type="GO" id="GO:0003735">
    <property type="term" value="F:structural constituent of ribosome"/>
    <property type="evidence" value="ECO:0000318"/>
    <property type="project" value="GO_Central"/>
</dbReference>
<dbReference type="GO" id="GO:0017148">
    <property type="term" value="P:negative regulation of translation"/>
    <property type="evidence" value="ECO:0000318"/>
    <property type="project" value="GO_Central"/>
</dbReference>
<dbReference type="GO" id="GO:0006412">
    <property type="term" value="P:translation"/>
    <property type="evidence" value="ECO:0007669"/>
    <property type="project" value="UniProtKB-UniRule"/>
</dbReference>
<dbReference type="CDD" id="cd00392">
    <property type="entry name" value="Ribosomal_L13"/>
    <property type="match status" value="1"/>
</dbReference>
<dbReference type="FunFam" id="3.90.1180.10:FF:000001">
    <property type="entry name" value="50S ribosomal protein L13"/>
    <property type="match status" value="1"/>
</dbReference>
<dbReference type="Gene3D" id="3.90.1180.10">
    <property type="entry name" value="Ribosomal protein L13"/>
    <property type="match status" value="1"/>
</dbReference>
<dbReference type="HAMAP" id="MF_01366">
    <property type="entry name" value="Ribosomal_uL13"/>
    <property type="match status" value="1"/>
</dbReference>
<dbReference type="InterPro" id="IPR005822">
    <property type="entry name" value="Ribosomal_uL13"/>
</dbReference>
<dbReference type="InterPro" id="IPR005823">
    <property type="entry name" value="Ribosomal_uL13_bac-type"/>
</dbReference>
<dbReference type="InterPro" id="IPR036899">
    <property type="entry name" value="Ribosomal_uL13_sf"/>
</dbReference>
<dbReference type="NCBIfam" id="TIGR01066">
    <property type="entry name" value="rplM_bact"/>
    <property type="match status" value="1"/>
</dbReference>
<dbReference type="PANTHER" id="PTHR11545:SF2">
    <property type="entry name" value="LARGE RIBOSOMAL SUBUNIT PROTEIN UL13M"/>
    <property type="match status" value="1"/>
</dbReference>
<dbReference type="PANTHER" id="PTHR11545">
    <property type="entry name" value="RIBOSOMAL PROTEIN L13"/>
    <property type="match status" value="1"/>
</dbReference>
<dbReference type="Pfam" id="PF00572">
    <property type="entry name" value="Ribosomal_L13"/>
    <property type="match status" value="1"/>
</dbReference>
<dbReference type="PIRSF" id="PIRSF002181">
    <property type="entry name" value="Ribosomal_L13"/>
    <property type="match status" value="1"/>
</dbReference>
<dbReference type="SUPFAM" id="SSF52161">
    <property type="entry name" value="Ribosomal protein L13"/>
    <property type="match status" value="1"/>
</dbReference>
<evidence type="ECO:0000255" key="1">
    <source>
        <dbReference type="HAMAP-Rule" id="MF_01366"/>
    </source>
</evidence>
<evidence type="ECO:0000305" key="2"/>
<feature type="chain" id="PRO_1000055350" description="Large ribosomal subunit protein uL13">
    <location>
        <begin position="1"/>
        <end position="154"/>
    </location>
</feature>